<protein>
    <recommendedName>
        <fullName evidence="2">Elongation factor Tu-1</fullName>
        <shortName evidence="2">EF-Tu-1</shortName>
        <ecNumber evidence="2">3.6.5.3</ecNumber>
    </recommendedName>
</protein>
<organism>
    <name type="scientific">Streptomyces coelicolor (strain ATCC BAA-471 / A3(2) / M145)</name>
    <dbReference type="NCBI Taxonomy" id="100226"/>
    <lineage>
        <taxon>Bacteria</taxon>
        <taxon>Bacillati</taxon>
        <taxon>Actinomycetota</taxon>
        <taxon>Actinomycetes</taxon>
        <taxon>Kitasatosporales</taxon>
        <taxon>Streptomycetaceae</taxon>
        <taxon>Streptomyces</taxon>
        <taxon>Streptomyces albidoflavus group</taxon>
    </lineage>
</organism>
<sequence>MAKAKFERTKPHVNIGTIGHIDHGKTTLTAAITKVLHDAYPDINEASAFDQIDKAPEERQRGITISIAHVEYQTEARHYAHVDCPGHADYIKNMITGAAQMDGAILVVAATDGPMPQTKEHVLLARQVGVPYIVVALNKADMVDDEEILELVELEVRELLSEYEFPGDDVPVVKVSALKALEGDKEWGNSVLELMKAVDEAIPEPERDVDKPFLMPIEDVFTITGRGTVVTGRIERGVLKVNETVDIIGIKTEKTTTTVTGIEMFRKLLDEGQAGENVGLLLRGIKREDVERGQVIIKPGSVTPHTEFEAQAYILSKDEGGRHTPFFNNYRPQFYFRTTDVTGVVTLPEGTEMVMPGDNTEMKVELIQPVAMEEGLKFAIREGGRTVGAGQVTKINK</sequence>
<reference key="1">
    <citation type="journal article" date="1994" name="Biochim. Biophys. Acta">
        <title>Cloning and sequencing of the tuf genes of Streptomyces coelicolor A3(2).</title>
        <authorList>
            <person name="van Wezel G.P."/>
            <person name="Woudt L.P."/>
            <person name="Vervenne R."/>
            <person name="Verdurmen M.L."/>
            <person name="Vijgenboom E."/>
            <person name="Bosch L."/>
        </authorList>
    </citation>
    <scope>NUCLEOTIDE SEQUENCE [GENOMIC DNA]</scope>
    <source>
        <strain>ATCC BAA-471 / A3(2) / M145</strain>
    </source>
</reference>
<reference key="2">
    <citation type="journal article" date="2002" name="Nature">
        <title>Complete genome sequence of the model actinomycete Streptomyces coelicolor A3(2).</title>
        <authorList>
            <person name="Bentley S.D."/>
            <person name="Chater K.F."/>
            <person name="Cerdeno-Tarraga A.-M."/>
            <person name="Challis G.L."/>
            <person name="Thomson N.R."/>
            <person name="James K.D."/>
            <person name="Harris D.E."/>
            <person name="Quail M.A."/>
            <person name="Kieser H."/>
            <person name="Harper D."/>
            <person name="Bateman A."/>
            <person name="Brown S."/>
            <person name="Chandra G."/>
            <person name="Chen C.W."/>
            <person name="Collins M."/>
            <person name="Cronin A."/>
            <person name="Fraser A."/>
            <person name="Goble A."/>
            <person name="Hidalgo J."/>
            <person name="Hornsby T."/>
            <person name="Howarth S."/>
            <person name="Huang C.-H."/>
            <person name="Kieser T."/>
            <person name="Larke L."/>
            <person name="Murphy L.D."/>
            <person name="Oliver K."/>
            <person name="O'Neil S."/>
            <person name="Rabbinowitsch E."/>
            <person name="Rajandream M.A."/>
            <person name="Rutherford K.M."/>
            <person name="Rutter S."/>
            <person name="Seeger K."/>
            <person name="Saunders D."/>
            <person name="Sharp S."/>
            <person name="Squares R."/>
            <person name="Squares S."/>
            <person name="Taylor K."/>
            <person name="Warren T."/>
            <person name="Wietzorrek A."/>
            <person name="Woodward J.R."/>
            <person name="Barrell B.G."/>
            <person name="Parkhill J."/>
            <person name="Hopwood D.A."/>
        </authorList>
    </citation>
    <scope>NUCLEOTIDE SEQUENCE [LARGE SCALE GENOMIC DNA]</scope>
    <source>
        <strain>ATCC BAA-471 / A3(2) / M145</strain>
    </source>
</reference>
<keyword id="KW-0963">Cytoplasm</keyword>
<keyword id="KW-0251">Elongation factor</keyword>
<keyword id="KW-0342">GTP-binding</keyword>
<keyword id="KW-0378">Hydrolase</keyword>
<keyword id="KW-0460">Magnesium</keyword>
<keyword id="KW-0479">Metal-binding</keyword>
<keyword id="KW-0547">Nucleotide-binding</keyword>
<keyword id="KW-0648">Protein biosynthesis</keyword>
<keyword id="KW-1185">Reference proteome</keyword>
<proteinExistence type="inferred from homology"/>
<comment type="function">
    <text evidence="2">GTP hydrolase that promotes the GTP-dependent binding of aminoacyl-tRNA to the A-site of ribosomes during protein biosynthesis.</text>
</comment>
<comment type="catalytic activity">
    <reaction evidence="2">
        <text>GTP + H2O = GDP + phosphate + H(+)</text>
        <dbReference type="Rhea" id="RHEA:19669"/>
        <dbReference type="ChEBI" id="CHEBI:15377"/>
        <dbReference type="ChEBI" id="CHEBI:15378"/>
        <dbReference type="ChEBI" id="CHEBI:37565"/>
        <dbReference type="ChEBI" id="CHEBI:43474"/>
        <dbReference type="ChEBI" id="CHEBI:58189"/>
        <dbReference type="EC" id="3.6.5.3"/>
    </reaction>
    <physiologicalReaction direction="left-to-right" evidence="2">
        <dbReference type="Rhea" id="RHEA:19670"/>
    </physiologicalReaction>
</comment>
<comment type="subunit">
    <text>Monomer.</text>
</comment>
<comment type="subcellular location">
    <subcellularLocation>
        <location evidence="2">Cytoplasm</location>
    </subcellularLocation>
</comment>
<comment type="similarity">
    <text evidence="2">Belongs to the TRAFAC class translation factor GTPase superfamily. Classic translation factor GTPase family. EF-Tu/EF-1A subfamily.</text>
</comment>
<dbReference type="EC" id="3.6.5.3" evidence="2"/>
<dbReference type="EMBL" id="X77039">
    <property type="protein sequence ID" value="CAA54329.1"/>
    <property type="molecule type" value="Genomic_DNA"/>
</dbReference>
<dbReference type="EMBL" id="AL939121">
    <property type="protein sequence ID" value="CAB81853.1"/>
    <property type="molecule type" value="Genomic_DNA"/>
</dbReference>
<dbReference type="PIR" id="S50138">
    <property type="entry name" value="S50138"/>
</dbReference>
<dbReference type="RefSeq" id="NP_628822.1">
    <property type="nucleotide sequence ID" value="NC_003888.3"/>
</dbReference>
<dbReference type="SMR" id="P40174"/>
<dbReference type="FunCoup" id="P40174">
    <property type="interactions" value="416"/>
</dbReference>
<dbReference type="STRING" id="100226.gene:17762311"/>
<dbReference type="PaxDb" id="100226-SCO4662"/>
<dbReference type="KEGG" id="sco:SCO4662"/>
<dbReference type="PATRIC" id="fig|100226.15.peg.4734"/>
<dbReference type="eggNOG" id="COG0050">
    <property type="taxonomic scope" value="Bacteria"/>
</dbReference>
<dbReference type="HOGENOM" id="CLU_007265_0_1_11"/>
<dbReference type="InParanoid" id="P40174"/>
<dbReference type="OrthoDB" id="9803139at2"/>
<dbReference type="PhylomeDB" id="P40174"/>
<dbReference type="Proteomes" id="UP000001973">
    <property type="component" value="Chromosome"/>
</dbReference>
<dbReference type="GO" id="GO:0005737">
    <property type="term" value="C:cytoplasm"/>
    <property type="evidence" value="ECO:0007669"/>
    <property type="project" value="UniProtKB-SubCell"/>
</dbReference>
<dbReference type="GO" id="GO:0005525">
    <property type="term" value="F:GTP binding"/>
    <property type="evidence" value="ECO:0007669"/>
    <property type="project" value="UniProtKB-UniRule"/>
</dbReference>
<dbReference type="GO" id="GO:0003924">
    <property type="term" value="F:GTPase activity"/>
    <property type="evidence" value="ECO:0007669"/>
    <property type="project" value="InterPro"/>
</dbReference>
<dbReference type="GO" id="GO:0003746">
    <property type="term" value="F:translation elongation factor activity"/>
    <property type="evidence" value="ECO:0000318"/>
    <property type="project" value="GO_Central"/>
</dbReference>
<dbReference type="GO" id="GO:0006414">
    <property type="term" value="P:translational elongation"/>
    <property type="evidence" value="ECO:0000318"/>
    <property type="project" value="GO_Central"/>
</dbReference>
<dbReference type="CDD" id="cd01884">
    <property type="entry name" value="EF_Tu"/>
    <property type="match status" value="1"/>
</dbReference>
<dbReference type="CDD" id="cd03697">
    <property type="entry name" value="EFTU_II"/>
    <property type="match status" value="1"/>
</dbReference>
<dbReference type="CDD" id="cd03707">
    <property type="entry name" value="EFTU_III"/>
    <property type="match status" value="1"/>
</dbReference>
<dbReference type="FunFam" id="2.40.30.10:FF:000001">
    <property type="entry name" value="Elongation factor Tu"/>
    <property type="match status" value="1"/>
</dbReference>
<dbReference type="FunFam" id="3.40.50.300:FF:000003">
    <property type="entry name" value="Elongation factor Tu"/>
    <property type="match status" value="1"/>
</dbReference>
<dbReference type="Gene3D" id="3.40.50.300">
    <property type="entry name" value="P-loop containing nucleotide triphosphate hydrolases"/>
    <property type="match status" value="1"/>
</dbReference>
<dbReference type="Gene3D" id="2.40.30.10">
    <property type="entry name" value="Translation factors"/>
    <property type="match status" value="2"/>
</dbReference>
<dbReference type="HAMAP" id="MF_00118_B">
    <property type="entry name" value="EF_Tu_B"/>
    <property type="match status" value="1"/>
</dbReference>
<dbReference type="InterPro" id="IPR041709">
    <property type="entry name" value="EF-Tu_GTP-bd"/>
</dbReference>
<dbReference type="InterPro" id="IPR050055">
    <property type="entry name" value="EF-Tu_GTPase"/>
</dbReference>
<dbReference type="InterPro" id="IPR004161">
    <property type="entry name" value="EFTu-like_2"/>
</dbReference>
<dbReference type="InterPro" id="IPR033720">
    <property type="entry name" value="EFTU_2"/>
</dbReference>
<dbReference type="InterPro" id="IPR031157">
    <property type="entry name" value="G_TR_CS"/>
</dbReference>
<dbReference type="InterPro" id="IPR027417">
    <property type="entry name" value="P-loop_NTPase"/>
</dbReference>
<dbReference type="InterPro" id="IPR005225">
    <property type="entry name" value="Small_GTP-bd"/>
</dbReference>
<dbReference type="InterPro" id="IPR000795">
    <property type="entry name" value="T_Tr_GTP-bd_dom"/>
</dbReference>
<dbReference type="InterPro" id="IPR009000">
    <property type="entry name" value="Transl_B-barrel_sf"/>
</dbReference>
<dbReference type="InterPro" id="IPR009001">
    <property type="entry name" value="Transl_elong_EF1A/Init_IF2_C"/>
</dbReference>
<dbReference type="InterPro" id="IPR004541">
    <property type="entry name" value="Transl_elong_EFTu/EF1A_bac/org"/>
</dbReference>
<dbReference type="InterPro" id="IPR004160">
    <property type="entry name" value="Transl_elong_EFTu/EF1A_C"/>
</dbReference>
<dbReference type="NCBIfam" id="TIGR00485">
    <property type="entry name" value="EF-Tu"/>
    <property type="match status" value="1"/>
</dbReference>
<dbReference type="NCBIfam" id="NF000766">
    <property type="entry name" value="PRK00049.1"/>
    <property type="match status" value="1"/>
</dbReference>
<dbReference type="NCBIfam" id="NF009372">
    <property type="entry name" value="PRK12735.1"/>
    <property type="match status" value="1"/>
</dbReference>
<dbReference type="NCBIfam" id="NF009373">
    <property type="entry name" value="PRK12736.1"/>
    <property type="match status" value="1"/>
</dbReference>
<dbReference type="NCBIfam" id="TIGR00231">
    <property type="entry name" value="small_GTP"/>
    <property type="match status" value="1"/>
</dbReference>
<dbReference type="PANTHER" id="PTHR43721:SF22">
    <property type="entry name" value="ELONGATION FACTOR TU, MITOCHONDRIAL"/>
    <property type="match status" value="1"/>
</dbReference>
<dbReference type="PANTHER" id="PTHR43721">
    <property type="entry name" value="ELONGATION FACTOR TU-RELATED"/>
    <property type="match status" value="1"/>
</dbReference>
<dbReference type="Pfam" id="PF00009">
    <property type="entry name" value="GTP_EFTU"/>
    <property type="match status" value="1"/>
</dbReference>
<dbReference type="Pfam" id="PF03144">
    <property type="entry name" value="GTP_EFTU_D2"/>
    <property type="match status" value="1"/>
</dbReference>
<dbReference type="Pfam" id="PF03143">
    <property type="entry name" value="GTP_EFTU_D3"/>
    <property type="match status" value="1"/>
</dbReference>
<dbReference type="PRINTS" id="PR00315">
    <property type="entry name" value="ELONGATNFCT"/>
</dbReference>
<dbReference type="SUPFAM" id="SSF50465">
    <property type="entry name" value="EF-Tu/eEF-1alpha/eIF2-gamma C-terminal domain"/>
    <property type="match status" value="1"/>
</dbReference>
<dbReference type="SUPFAM" id="SSF52540">
    <property type="entry name" value="P-loop containing nucleoside triphosphate hydrolases"/>
    <property type="match status" value="1"/>
</dbReference>
<dbReference type="SUPFAM" id="SSF50447">
    <property type="entry name" value="Translation proteins"/>
    <property type="match status" value="1"/>
</dbReference>
<dbReference type="PROSITE" id="PS00301">
    <property type="entry name" value="G_TR_1"/>
    <property type="match status" value="1"/>
</dbReference>
<dbReference type="PROSITE" id="PS51722">
    <property type="entry name" value="G_TR_2"/>
    <property type="match status" value="1"/>
</dbReference>
<gene>
    <name evidence="2" type="primary">tuf1</name>
    <name type="ordered locus">SCO4662</name>
    <name type="ORF">SCD40A.08</name>
</gene>
<feature type="chain" id="PRO_0000091401" description="Elongation factor Tu-1">
    <location>
        <begin position="1"/>
        <end position="397"/>
    </location>
</feature>
<feature type="domain" description="tr-type G">
    <location>
        <begin position="10"/>
        <end position="206"/>
    </location>
</feature>
<feature type="region of interest" description="G1" evidence="1">
    <location>
        <begin position="19"/>
        <end position="26"/>
    </location>
</feature>
<feature type="region of interest" description="G2" evidence="1">
    <location>
        <begin position="62"/>
        <end position="66"/>
    </location>
</feature>
<feature type="region of interest" description="G3" evidence="1">
    <location>
        <begin position="83"/>
        <end position="86"/>
    </location>
</feature>
<feature type="region of interest" description="G4" evidence="1">
    <location>
        <begin position="138"/>
        <end position="141"/>
    </location>
</feature>
<feature type="region of interest" description="G5" evidence="1">
    <location>
        <begin position="176"/>
        <end position="178"/>
    </location>
</feature>
<feature type="binding site" evidence="2">
    <location>
        <begin position="19"/>
        <end position="26"/>
    </location>
    <ligand>
        <name>GTP</name>
        <dbReference type="ChEBI" id="CHEBI:37565"/>
    </ligand>
</feature>
<feature type="binding site" evidence="2">
    <location>
        <position position="26"/>
    </location>
    <ligand>
        <name>Mg(2+)</name>
        <dbReference type="ChEBI" id="CHEBI:18420"/>
    </ligand>
</feature>
<feature type="binding site" evidence="2">
    <location>
        <begin position="83"/>
        <end position="87"/>
    </location>
    <ligand>
        <name>GTP</name>
        <dbReference type="ChEBI" id="CHEBI:37565"/>
    </ligand>
</feature>
<feature type="binding site" evidence="2">
    <location>
        <begin position="138"/>
        <end position="141"/>
    </location>
    <ligand>
        <name>GTP</name>
        <dbReference type="ChEBI" id="CHEBI:37565"/>
    </ligand>
</feature>
<accession>P40174</accession>
<evidence type="ECO:0000250" key="1"/>
<evidence type="ECO:0000255" key="2">
    <source>
        <dbReference type="HAMAP-Rule" id="MF_00118"/>
    </source>
</evidence>
<name>EFTU1_STRCO</name>